<keyword id="KW-0175">Coiled coil</keyword>
<keyword id="KW-0238">DNA-binding</keyword>
<keyword id="KW-1035">Host cytoplasm</keyword>
<keyword id="KW-0945">Host-virus interaction</keyword>
<keyword id="KW-1090">Inhibition of host innate immune response by virus</keyword>
<keyword id="KW-0426">Late protein</keyword>
<keyword id="KW-1185">Reference proteome</keyword>
<keyword id="KW-0899">Viral immunoevasion</keyword>
<keyword id="KW-0946">Virion</keyword>
<keyword id="KW-0920">Virion tegument</keyword>
<evidence type="ECO:0000250" key="1">
    <source>
        <dbReference type="UniProtKB" id="P03197"/>
    </source>
</evidence>
<evidence type="ECO:0000250" key="2">
    <source>
        <dbReference type="UniProtKB" id="Q2HR80"/>
    </source>
</evidence>
<evidence type="ECO:0000255" key="3"/>
<evidence type="ECO:0000256" key="4">
    <source>
        <dbReference type="SAM" id="MobiDB-lite"/>
    </source>
</evidence>
<evidence type="ECO:0000269" key="5">
    <source>
    </source>
</evidence>
<evidence type="ECO:0000305" key="6"/>
<proteinExistence type="evidence at protein level"/>
<feature type="chain" id="PRO_0000376063" description="Tegument protein BLRF2">
    <location>
        <begin position="1"/>
        <end position="162"/>
    </location>
</feature>
<feature type="region of interest" description="Disordered" evidence="4">
    <location>
        <begin position="118"/>
        <end position="162"/>
    </location>
</feature>
<feature type="coiled-coil region" evidence="3">
    <location>
        <begin position="12"/>
        <end position="43"/>
    </location>
</feature>
<feature type="compositionally biased region" description="Basic and acidic residues" evidence="4">
    <location>
        <begin position="151"/>
        <end position="162"/>
    </location>
</feature>
<reference key="1">
    <citation type="journal article" date="2006" name="Virology">
        <title>The genome of Epstein-Barr virus type 2 strain AG876.</title>
        <authorList>
            <person name="Dolan A."/>
            <person name="Addison C."/>
            <person name="Gatherer D."/>
            <person name="Davison A.J."/>
            <person name="McGeoch D.J."/>
        </authorList>
    </citation>
    <scope>NUCLEOTIDE SEQUENCE [LARGE SCALE GENOMIC DNA]</scope>
</reference>
<reference key="2">
    <citation type="journal article" date="2015" name="Cell Host Microbe">
        <title>Inhibition of cGAS DNA Sensing by a Herpesvirus Virion Protein.</title>
        <authorList>
            <person name="Wu J.J."/>
            <person name="Li W."/>
            <person name="Shao Y."/>
            <person name="Avey D."/>
            <person name="Fu B."/>
            <person name="Gillen J."/>
            <person name="Hand T."/>
            <person name="Ma S."/>
            <person name="Liu X."/>
            <person name="Miley W."/>
            <person name="Konrad A."/>
            <person name="Neipel F."/>
            <person name="Stuerzl M."/>
            <person name="Whitby D."/>
            <person name="Li H."/>
            <person name="Zhu F."/>
        </authorList>
    </citation>
    <scope>FUNCTION</scope>
    <scope>INTERACTION WITH HOST CGAS</scope>
    <scope>SUBCELLULAR LOCATION</scope>
</reference>
<sequence length="162" mass="17687">MSAPRKVRLPSVKAVDMSMEDMAARLARLESENKALKQQVLRGGACASSTSVPSAPVPPPEPLTARQREVMITQATGRLASQAMKKIEDKVRKSVDGVTTRNEMENILQNLTLRIQVSMLGAKGQPSPGEGTRPRESNDPNATRRARSRSRGREAKKVQISD</sequence>
<organismHost>
    <name type="scientific">Homo sapiens</name>
    <name type="common">Human</name>
    <dbReference type="NCBI Taxonomy" id="9606"/>
</organismHost>
<protein>
    <recommendedName>
        <fullName>Tegument protein BLRF2</fullName>
    </recommendedName>
</protein>
<gene>
    <name type="ORF">BLRF2</name>
</gene>
<dbReference type="EMBL" id="DQ279927">
    <property type="protein sequence ID" value="ABB89241.1"/>
    <property type="molecule type" value="Genomic_DNA"/>
</dbReference>
<dbReference type="RefSeq" id="YP_001129461.1">
    <property type="nucleotide sequence ID" value="NC_009334.1"/>
</dbReference>
<dbReference type="RefSeq" id="YP_401666.1">
    <property type="nucleotide sequence ID" value="NC_007605.1"/>
</dbReference>
<dbReference type="SMR" id="P0C717"/>
<dbReference type="IntAct" id="P0C717">
    <property type="interactions" value="8"/>
</dbReference>
<dbReference type="MINT" id="P0C717"/>
<dbReference type="DNASU" id="3783717"/>
<dbReference type="GeneID" id="3783717"/>
<dbReference type="KEGG" id="vg:3783717"/>
<dbReference type="KEGG" id="vg:5176224"/>
<dbReference type="Proteomes" id="UP000007639">
    <property type="component" value="Genome"/>
</dbReference>
<dbReference type="GO" id="GO:0030430">
    <property type="term" value="C:host cell cytoplasm"/>
    <property type="evidence" value="ECO:0007669"/>
    <property type="project" value="UniProtKB-SubCell"/>
</dbReference>
<dbReference type="GO" id="GO:0019033">
    <property type="term" value="C:viral tegument"/>
    <property type="evidence" value="ECO:0007669"/>
    <property type="project" value="UniProtKB-SubCell"/>
</dbReference>
<dbReference type="GO" id="GO:0003677">
    <property type="term" value="F:DNA binding"/>
    <property type="evidence" value="ECO:0007669"/>
    <property type="project" value="UniProtKB-KW"/>
</dbReference>
<dbReference type="GO" id="GO:0042802">
    <property type="term" value="F:identical protein binding"/>
    <property type="evidence" value="ECO:0000353"/>
    <property type="project" value="IntAct"/>
</dbReference>
<dbReference type="GO" id="GO:0052170">
    <property type="term" value="P:symbiont-mediated suppression of host innate immune response"/>
    <property type="evidence" value="ECO:0007669"/>
    <property type="project" value="UniProtKB-KW"/>
</dbReference>
<dbReference type="Gene3D" id="1.10.3390.10">
    <property type="entry name" value="YejL-like"/>
    <property type="match status" value="1"/>
</dbReference>
<dbReference type="InterPro" id="IPR008642">
    <property type="entry name" value="Herpes_BLRF2"/>
</dbReference>
<dbReference type="Pfam" id="PF05812">
    <property type="entry name" value="Herpes_BLRF2"/>
    <property type="match status" value="1"/>
</dbReference>
<dbReference type="SUPFAM" id="SSF160459">
    <property type="entry name" value="BLRF2-like"/>
    <property type="match status" value="1"/>
</dbReference>
<organism>
    <name type="scientific">Epstein-Barr virus (strain AG876)</name>
    <name type="common">HHV-4</name>
    <name type="synonym">Human herpesvirus 4</name>
    <dbReference type="NCBI Taxonomy" id="82830"/>
    <lineage>
        <taxon>Viruses</taxon>
        <taxon>Duplodnaviria</taxon>
        <taxon>Heunggongvirae</taxon>
        <taxon>Peploviricota</taxon>
        <taxon>Herviviricetes</taxon>
        <taxon>Herpesvirales</taxon>
        <taxon>Orthoherpesviridae</taxon>
        <taxon>Gammaherpesvirinae</taxon>
        <taxon>Lymphocryptovirus</taxon>
        <taxon>Lymphocryptovirus humangamma4</taxon>
        <taxon>Epstein-Barr virus (strain GD1)</taxon>
    </lineage>
</organism>
<accession>P0C717</accession>
<accession>Q777F1</accession>
<comment type="function">
    <text evidence="2 5">Plays a role in the inhibition of host innate immune system by targeting the CGAS enzymatic activity which is the principal cytosolic DNA sensor that detects invading viral DNA (PubMed:26320998). Acts by inhibiting CGAS-DNA phase separation: directly binds double-stranded DNA (dsDNA) in a length dependent but sequence independent manner and is able to form DNA-induced phase separation in infected cells. DNA phase separation of ORF52 mediates disruption of liquid-like droplets in which CGAS is activated, thereby preventing CGAS activity (By similarity).</text>
</comment>
<comment type="subunit">
    <text evidence="2 5">Homooligomer; homooligomerizes and binds double-stranded DNA (dsDNA) cooperatively (By similarity). Interacts with host CGAS (PubMed:26320998).</text>
</comment>
<comment type="interaction">
    <interactant intactId="EBI-9644994">
        <id>P0C717</id>
    </interactant>
    <interactant intactId="EBI-9644994">
        <id>P0C717</id>
        <label>BLRF2</label>
    </interactant>
    <organismsDiffer>false</organismsDiffer>
    <experiments>2</experiments>
</comment>
<comment type="interaction">
    <interactant intactId="EBI-9644994">
        <id>P0C717</id>
    </interactant>
    <interactant intactId="EBI-9645143">
        <id>K9USF9</id>
        <label>BMLF1</label>
    </interactant>
    <organismsDiffer>true</organismsDiffer>
    <experiments>2</experiments>
</comment>
<comment type="subcellular location">
    <subcellularLocation>
        <location evidence="1">Virion tegument</location>
    </subcellularLocation>
    <subcellularLocation>
        <location evidence="5">Host cytoplasm</location>
    </subcellularLocation>
</comment>
<comment type="similarity">
    <text evidence="6">Belongs to the herpesviridae BLRF2 family.</text>
</comment>
<name>BLRF2_EBVA8</name>